<evidence type="ECO:0000250" key="1"/>
<evidence type="ECO:0000250" key="2">
    <source>
        <dbReference type="UniProtKB" id="P18089"/>
    </source>
</evidence>
<evidence type="ECO:0000255" key="3">
    <source>
        <dbReference type="PROSITE-ProRule" id="PRU00521"/>
    </source>
</evidence>
<evidence type="ECO:0000256" key="4">
    <source>
        <dbReference type="SAM" id="MobiDB-lite"/>
    </source>
</evidence>
<organism>
    <name type="scientific">Macroscelides proboscideus</name>
    <name type="common">Short-eared elephant shrew</name>
    <dbReference type="NCBI Taxonomy" id="29082"/>
    <lineage>
        <taxon>Eukaryota</taxon>
        <taxon>Metazoa</taxon>
        <taxon>Chordata</taxon>
        <taxon>Craniata</taxon>
        <taxon>Vertebrata</taxon>
        <taxon>Euteleostomi</taxon>
        <taxon>Mammalia</taxon>
        <taxon>Eutheria</taxon>
        <taxon>Afrotheria</taxon>
        <taxon>Macroscelidea</taxon>
        <taxon>Macroscelididae</taxon>
        <taxon>Macroscelides</taxon>
    </lineage>
</organism>
<gene>
    <name type="primary">ADRA2B</name>
</gene>
<comment type="function">
    <text>Alpha-2 adrenergic receptors mediate the catecholamine-induced inhibition of adenylate cyclase through the action of G proteins.</text>
</comment>
<comment type="subunit">
    <text evidence="2">Interacts with RAB26. Interacts with PPP1R9B. Interacts with GGA1, GGA2 and GGA3.</text>
</comment>
<comment type="subcellular location">
    <subcellularLocation>
        <location evidence="2">Cell membrane</location>
        <topology evidence="2">Multi-pass membrane protein</topology>
    </subcellularLocation>
    <text evidence="2">Interaction with RAB26, GGA1, GGA2 and GGA3 mediates transport from the Golgi to the cell membrane.</text>
</comment>
<comment type="similarity">
    <text evidence="3">Belongs to the G-protein coupled receptor 1 family. Adrenergic receptor subfamily. ADRA2B sub-subfamily.</text>
</comment>
<name>ADA2B_MACPR</name>
<protein>
    <recommendedName>
        <fullName>Alpha-2B adrenergic receptor</fullName>
    </recommendedName>
    <alternativeName>
        <fullName>Alpha-2B adrenoreceptor</fullName>
        <shortName>Alpha-2B adrenoceptor</shortName>
        <shortName>Alpha-2BAR</shortName>
    </alternativeName>
</protein>
<keyword id="KW-1003">Cell membrane</keyword>
<keyword id="KW-1015">Disulfide bond</keyword>
<keyword id="KW-0297">G-protein coupled receptor</keyword>
<keyword id="KW-0449">Lipoprotein</keyword>
<keyword id="KW-0472">Membrane</keyword>
<keyword id="KW-0564">Palmitate</keyword>
<keyword id="KW-0675">Receptor</keyword>
<keyword id="KW-0807">Transducer</keyword>
<keyword id="KW-0812">Transmembrane</keyword>
<keyword id="KW-1133">Transmembrane helix</keyword>
<proteinExistence type="inferred from homology"/>
<sequence>AIAAVITFLILFTIFGNALVILAVLTSRSLRAPQNLFLVSLAAADILVATLIIPFSLANELLGYWYFRHTWCXVYLALDVLFCTSSIVHLCAISLDRYWAVSRALEYNSKRTPRRIKCIILTVWLIAAAISLPPLIYKGDQDPQPRGRPQCKLNQEAWYILSSSIGSFFVPCLIMILVYLRIYLIAKRSSSRRKPRAKGXPREGESKQPQLRPVGTSVSARPPALTSPLAVTGEANGHSKPTGERETPEDLVSPASPPSWPAIPNSGQGRKEGVCGTSPEEEAEEEEECGPEAVPASPALACSPSLQPPQGSRVLATLRGQVLLGRGVGTARGQWWRRRAQLTREKRFTFVLAVVIGVFVLCWFPFFFSYSLGAICPQHCKVPHGLF</sequence>
<dbReference type="EMBL" id="Y12524">
    <property type="protein sequence ID" value="CAA73124.2"/>
    <property type="molecule type" value="Genomic_DNA"/>
</dbReference>
<dbReference type="GO" id="GO:0009986">
    <property type="term" value="C:cell surface"/>
    <property type="evidence" value="ECO:0000250"/>
    <property type="project" value="UniProtKB"/>
</dbReference>
<dbReference type="GO" id="GO:0005886">
    <property type="term" value="C:plasma membrane"/>
    <property type="evidence" value="ECO:0007669"/>
    <property type="project" value="UniProtKB-SubCell"/>
</dbReference>
<dbReference type="GO" id="GO:0004938">
    <property type="term" value="F:alpha2-adrenergic receptor activity"/>
    <property type="evidence" value="ECO:0007669"/>
    <property type="project" value="InterPro"/>
</dbReference>
<dbReference type="GO" id="GO:0051379">
    <property type="term" value="F:epinephrine binding"/>
    <property type="evidence" value="ECO:0007669"/>
    <property type="project" value="TreeGrafter"/>
</dbReference>
<dbReference type="GO" id="GO:0030168">
    <property type="term" value="P:platelet activation"/>
    <property type="evidence" value="ECO:0007669"/>
    <property type="project" value="InterPro"/>
</dbReference>
<dbReference type="GO" id="GO:0006940">
    <property type="term" value="P:regulation of smooth muscle contraction"/>
    <property type="evidence" value="ECO:0007669"/>
    <property type="project" value="InterPro"/>
</dbReference>
<dbReference type="GO" id="GO:0019229">
    <property type="term" value="P:regulation of vasoconstriction"/>
    <property type="evidence" value="ECO:0007669"/>
    <property type="project" value="InterPro"/>
</dbReference>
<dbReference type="CDD" id="cd15321">
    <property type="entry name" value="7tmA_alpha2B_AR"/>
    <property type="match status" value="1"/>
</dbReference>
<dbReference type="FunFam" id="1.20.1070.10:FF:000330">
    <property type="entry name" value="Alpha 2B adrenergic receptor"/>
    <property type="match status" value="1"/>
</dbReference>
<dbReference type="FunFam" id="1.20.1070.10:FF:000185">
    <property type="entry name" value="Alpha-2B adrenergic receptor"/>
    <property type="match status" value="1"/>
</dbReference>
<dbReference type="Gene3D" id="1.20.1070.10">
    <property type="entry name" value="Rhodopsin 7-helix transmembrane proteins"/>
    <property type="match status" value="1"/>
</dbReference>
<dbReference type="InterPro" id="IPR002233">
    <property type="entry name" value="ADR_fam"/>
</dbReference>
<dbReference type="InterPro" id="IPR000207">
    <property type="entry name" value="ADRA2B_rcpt"/>
</dbReference>
<dbReference type="InterPro" id="IPR000276">
    <property type="entry name" value="GPCR_Rhodpsn"/>
</dbReference>
<dbReference type="InterPro" id="IPR017452">
    <property type="entry name" value="GPCR_Rhodpsn_7TM"/>
</dbReference>
<dbReference type="PANTHER" id="PTHR24248">
    <property type="entry name" value="ADRENERGIC RECEPTOR-RELATED G-PROTEIN COUPLED RECEPTOR"/>
    <property type="match status" value="1"/>
</dbReference>
<dbReference type="PANTHER" id="PTHR24248:SF130">
    <property type="entry name" value="ALPHA-2B ADRENERGIC RECEPTOR"/>
    <property type="match status" value="1"/>
</dbReference>
<dbReference type="Pfam" id="PF00001">
    <property type="entry name" value="7tm_1"/>
    <property type="match status" value="1"/>
</dbReference>
<dbReference type="PRINTS" id="PR01103">
    <property type="entry name" value="ADRENERGICR"/>
</dbReference>
<dbReference type="PRINTS" id="PR00559">
    <property type="entry name" value="ADRENRGCA2BR"/>
</dbReference>
<dbReference type="PRINTS" id="PR00237">
    <property type="entry name" value="GPCRRHODOPSN"/>
</dbReference>
<dbReference type="SUPFAM" id="SSF81321">
    <property type="entry name" value="Family A G protein-coupled receptor-like"/>
    <property type="match status" value="1"/>
</dbReference>
<dbReference type="PROSITE" id="PS00237">
    <property type="entry name" value="G_PROTEIN_RECEP_F1_1"/>
    <property type="match status" value="1"/>
</dbReference>
<dbReference type="PROSITE" id="PS50262">
    <property type="entry name" value="G_PROTEIN_RECEP_F1_2"/>
    <property type="match status" value="1"/>
</dbReference>
<reference key="1">
    <citation type="journal article" date="1997" name="Nature">
        <title>Endemic African mammals shake the phylogenetic tree.</title>
        <authorList>
            <person name="Springer M.S."/>
            <person name="Cleven G.C."/>
            <person name="Madsen O.J."/>
            <person name="de Jong W.W."/>
            <person name="Waddell V.G."/>
            <person name="Amrine H.M."/>
            <person name="Stanhope M.J."/>
        </authorList>
    </citation>
    <scope>NUCLEOTIDE SEQUENCE [GENOMIC DNA]</scope>
</reference>
<reference key="2">
    <citation type="submission" date="2000-05" db="EMBL/GenBank/DDBJ databases">
        <authorList>
            <person name="Springer M.S."/>
            <person name="Cleven G.C."/>
            <person name="Madsen O.J."/>
            <person name="de Jong W.W."/>
            <person name="Waddell V.G."/>
            <person name="Amrine H.M."/>
            <person name="Stanhope M.J."/>
        </authorList>
    </citation>
    <scope>SEQUENCE REVISION TO 148 AND 255</scope>
</reference>
<accession>O19025</accession>
<feature type="chain" id="PRO_0000069095" description="Alpha-2B adrenergic receptor">
    <location>
        <begin position="1" status="less than"/>
        <end position="387" status="greater than"/>
    </location>
</feature>
<feature type="transmembrane region" description="Helical; Name=1" evidence="1">
    <location>
        <begin position="1" status="less than"/>
        <end position="25"/>
    </location>
</feature>
<feature type="topological domain" description="Cytoplasmic" evidence="1">
    <location>
        <begin position="26"/>
        <end position="36"/>
    </location>
</feature>
<feature type="transmembrane region" description="Helical; Name=2" evidence="1">
    <location>
        <begin position="37"/>
        <end position="62"/>
    </location>
</feature>
<feature type="topological domain" description="Extracellular" evidence="1">
    <location>
        <begin position="63"/>
        <end position="72"/>
    </location>
</feature>
<feature type="transmembrane region" description="Helical; Name=3" evidence="1">
    <location>
        <begin position="73"/>
        <end position="95"/>
    </location>
</feature>
<feature type="topological domain" description="Cytoplasmic" evidence="1">
    <location>
        <begin position="96"/>
        <end position="117"/>
    </location>
</feature>
<feature type="transmembrane region" description="Helical; Name=4" evidence="1">
    <location>
        <begin position="118"/>
        <end position="140"/>
    </location>
</feature>
<feature type="topological domain" description="Extracellular" evidence="1">
    <location>
        <begin position="141"/>
        <end position="156"/>
    </location>
</feature>
<feature type="transmembrane region" description="Helical; Name=5" evidence="1">
    <location>
        <begin position="157"/>
        <end position="180"/>
    </location>
</feature>
<feature type="topological domain" description="Cytoplasmic" evidence="1">
    <location>
        <begin position="181"/>
        <end position="351"/>
    </location>
</feature>
<feature type="transmembrane region" description="Helical; Name=6" evidence="1">
    <location>
        <begin position="352"/>
        <end position="375"/>
    </location>
</feature>
<feature type="topological domain" description="Extracellular" evidence="1">
    <location>
        <begin position="376"/>
        <end position="384"/>
    </location>
</feature>
<feature type="transmembrane region" description="Helical; Name=7" evidence="1">
    <location>
        <begin position="385"/>
        <end position="387" status="greater than"/>
    </location>
</feature>
<feature type="region of interest" description="Disordered" evidence="4">
    <location>
        <begin position="193"/>
        <end position="303"/>
    </location>
</feature>
<feature type="compositionally biased region" description="Acidic residues" evidence="4">
    <location>
        <begin position="279"/>
        <end position="290"/>
    </location>
</feature>
<feature type="site" description="Implicated in ligand binding" evidence="1">
    <location>
        <position position="79"/>
    </location>
</feature>
<feature type="site" description="Implicated in catechol agonist binding" evidence="1">
    <location>
        <position position="163"/>
    </location>
</feature>
<feature type="site" description="Implicated in catechol agonist binding" evidence="1">
    <location>
        <position position="167"/>
    </location>
</feature>
<feature type="disulfide bond" evidence="3">
    <location>
        <begin position="72"/>
        <end position="151"/>
    </location>
</feature>
<feature type="non-terminal residue">
    <location>
        <position position="1"/>
    </location>
</feature>
<feature type="non-terminal residue">
    <location>
        <position position="387"/>
    </location>
</feature>